<proteinExistence type="evidence at protein level"/>
<accession>P39051</accession>
<evidence type="ECO:0000250" key="1"/>
<evidence type="ECO:0000305" key="2"/>
<evidence type="ECO:0007829" key="3">
    <source>
        <dbReference type="PDB" id="2WBA"/>
    </source>
</evidence>
<sequence length="492" mass="53284">MSKIFDLVVIGAGSGGLEAGWNAATLYKKRVAVIDVQTHHGPPHYAALGGTCVNVGCVPKKLMVTGAQYMDHLRESAGFGWEFDGSSVKANWKKLIAAKNEAVLDINKSYEGMFNDTEGLDFFLGWGSLESKNVVVVRETADPKSAVKERLQADHILLATGSWPQMPAIPGVEHCISSNEAFYLPEPPRRVLTVGGGFISVEFAGIFNAYKPPGGKVTLCYRNNLILRGFDETIREEVTKQLTANGIEIMTNENPAKVSLNTDGSKHVTFESGKTLDVDVVMMAIGRIPRTNDLQLGNVGVKLTPKGGVQVDEFSRTNVPNIYAIGDITDRLMLTPVAINEGAALVDTVFGNKPRKTDHTRVASAVFSIPPIGTCGLIEEVAAKEFEKVAVYMSSFTPLMHNISGSKYKKFVAKIVTNHSDGTVLGVHLLGDGAPEIIQAVGVCLRLNAKISDFYNTIGVHPTSAEELCSMRTPSYYYLKGEKMETLPESSL</sequence>
<gene>
    <name type="primary">TPR</name>
</gene>
<reference key="1">
    <citation type="journal article" date="1992" name="Mol. Microbiol.">
        <title>Molecular characterization of the trypanothione reductase gene from Crithidia fasciculata and Trypanosoma brucei: comparison with other flavoprotein disulphide oxidoreductases with respect to substrate specificity and catalytic mechanism.</title>
        <authorList>
            <person name="Aboagye-Kwarteng T."/>
            <person name="Smith K."/>
            <person name="Fairlamb A.H."/>
        </authorList>
    </citation>
    <scope>NUCLEOTIDE SEQUENCE [GENOMIC DNA]</scope>
    <source>
        <strain>ILTAT 1.1</strain>
    </source>
</reference>
<keyword id="KW-0002">3D-structure</keyword>
<keyword id="KW-0963">Cytoplasm</keyword>
<keyword id="KW-1015">Disulfide bond</keyword>
<keyword id="KW-0274">FAD</keyword>
<keyword id="KW-0285">Flavoprotein</keyword>
<keyword id="KW-0521">NADP</keyword>
<keyword id="KW-0560">Oxidoreductase</keyword>
<keyword id="KW-0676">Redox-active center</keyword>
<comment type="function">
    <text>Trypanothione is the parasite analog of glutathione; this enzyme is the equivalent of glutathione reductase.</text>
</comment>
<comment type="catalytic activity">
    <reaction>
        <text>trypanothione + NADP(+) = trypanothione disulfide + NADPH + H(+)</text>
        <dbReference type="Rhea" id="RHEA:16757"/>
        <dbReference type="ChEBI" id="CHEBI:15378"/>
        <dbReference type="ChEBI" id="CHEBI:57783"/>
        <dbReference type="ChEBI" id="CHEBI:58290"/>
        <dbReference type="ChEBI" id="CHEBI:58349"/>
        <dbReference type="ChEBI" id="CHEBI:58661"/>
        <dbReference type="EC" id="1.8.1.12"/>
    </reaction>
</comment>
<comment type="cofactor">
    <cofactor evidence="1">
        <name>FAD</name>
        <dbReference type="ChEBI" id="CHEBI:57692"/>
    </cofactor>
    <text evidence="1">Binds 1 FAD per subunit.</text>
</comment>
<comment type="subunit">
    <text>Homodimer.</text>
</comment>
<comment type="subcellular location">
    <subcellularLocation>
        <location>Cytoplasm</location>
    </subcellularLocation>
</comment>
<comment type="miscellaneous">
    <text>The active site is a redox-active disulfide bond.</text>
</comment>
<comment type="similarity">
    <text evidence="2">Belongs to the class-I pyridine nucleotide-disulfide oxidoreductase family.</text>
</comment>
<feature type="chain" id="PRO_0000067990" description="Trypanothione reductase">
    <location>
        <begin position="1"/>
        <end position="492"/>
    </location>
</feature>
<feature type="active site" description="Proton acceptor" evidence="1">
    <location>
        <position position="461"/>
    </location>
</feature>
<feature type="binding site" evidence="1">
    <location>
        <begin position="35"/>
        <end position="52"/>
    </location>
    <ligand>
        <name>FAD</name>
        <dbReference type="ChEBI" id="CHEBI:57692"/>
    </ligand>
</feature>
<feature type="disulfide bond" description="Redox-active" evidence="1">
    <location>
        <begin position="52"/>
        <end position="57"/>
    </location>
</feature>
<feature type="strand" evidence="3">
    <location>
        <begin position="3"/>
        <end position="10"/>
    </location>
</feature>
<feature type="helix" evidence="3">
    <location>
        <begin position="14"/>
        <end position="27"/>
    </location>
</feature>
<feature type="strand" evidence="3">
    <location>
        <begin position="31"/>
        <end position="36"/>
    </location>
</feature>
<feature type="strand" evidence="3">
    <location>
        <begin position="38"/>
        <end position="41"/>
    </location>
</feature>
<feature type="turn" evidence="3">
    <location>
        <begin position="42"/>
        <end position="44"/>
    </location>
</feature>
<feature type="helix" evidence="3">
    <location>
        <begin position="50"/>
        <end position="55"/>
    </location>
</feature>
<feature type="helix" evidence="3">
    <location>
        <begin position="57"/>
        <end position="75"/>
    </location>
</feature>
<feature type="helix" evidence="3">
    <location>
        <begin position="76"/>
        <end position="79"/>
    </location>
</feature>
<feature type="helix" evidence="3">
    <location>
        <begin position="85"/>
        <end position="87"/>
    </location>
</feature>
<feature type="helix" evidence="3">
    <location>
        <begin position="92"/>
        <end position="116"/>
    </location>
</feature>
<feature type="strand" evidence="3">
    <location>
        <begin position="120"/>
        <end position="131"/>
    </location>
</feature>
<feature type="strand" evidence="3">
    <location>
        <begin position="134"/>
        <end position="142"/>
    </location>
</feature>
<feature type="strand" evidence="3">
    <location>
        <begin position="147"/>
        <end position="158"/>
    </location>
</feature>
<feature type="strand" evidence="3">
    <location>
        <begin position="162"/>
        <end position="164"/>
    </location>
</feature>
<feature type="helix" evidence="3">
    <location>
        <begin position="172"/>
        <end position="174"/>
    </location>
</feature>
<feature type="helix" evidence="3">
    <location>
        <begin position="178"/>
        <end position="181"/>
    </location>
</feature>
<feature type="strand" evidence="3">
    <location>
        <begin position="189"/>
        <end position="194"/>
    </location>
</feature>
<feature type="helix" evidence="3">
    <location>
        <begin position="198"/>
        <end position="210"/>
    </location>
</feature>
<feature type="strand" evidence="3">
    <location>
        <begin position="216"/>
        <end position="227"/>
    </location>
</feature>
<feature type="helix" evidence="3">
    <location>
        <begin position="232"/>
        <end position="243"/>
    </location>
</feature>
<feature type="turn" evidence="3">
    <location>
        <begin position="244"/>
        <end position="246"/>
    </location>
</feature>
<feature type="strand" evidence="3">
    <location>
        <begin position="247"/>
        <end position="252"/>
    </location>
</feature>
<feature type="strand" evidence="3">
    <location>
        <begin position="255"/>
        <end position="260"/>
    </location>
</feature>
<feature type="strand" evidence="3">
    <location>
        <begin position="266"/>
        <end position="270"/>
    </location>
</feature>
<feature type="strand" evidence="3">
    <location>
        <begin position="275"/>
        <end position="283"/>
    </location>
</feature>
<feature type="strand" evidence="3">
    <location>
        <begin position="287"/>
        <end position="289"/>
    </location>
</feature>
<feature type="helix" evidence="3">
    <location>
        <begin position="296"/>
        <end position="298"/>
    </location>
</feature>
<feature type="strand" evidence="3">
    <location>
        <begin position="307"/>
        <end position="309"/>
    </location>
</feature>
<feature type="strand" evidence="3">
    <location>
        <begin position="322"/>
        <end position="324"/>
    </location>
</feature>
<feature type="helix" evidence="3">
    <location>
        <begin position="326"/>
        <end position="329"/>
    </location>
</feature>
<feature type="helix" evidence="3">
    <location>
        <begin position="335"/>
        <end position="349"/>
    </location>
</feature>
<feature type="strand" evidence="3">
    <location>
        <begin position="363"/>
        <end position="366"/>
    </location>
</feature>
<feature type="strand" evidence="3">
    <location>
        <begin position="372"/>
        <end position="376"/>
    </location>
</feature>
<feature type="helix" evidence="3">
    <location>
        <begin position="379"/>
        <end position="385"/>
    </location>
</feature>
<feature type="strand" evidence="3">
    <location>
        <begin position="387"/>
        <end position="396"/>
    </location>
</feature>
<feature type="helix" evidence="3">
    <location>
        <begin position="399"/>
        <end position="404"/>
    </location>
</feature>
<feature type="strand" evidence="3">
    <location>
        <begin position="411"/>
        <end position="418"/>
    </location>
</feature>
<feature type="turn" evidence="3">
    <location>
        <begin position="419"/>
        <end position="421"/>
    </location>
</feature>
<feature type="strand" evidence="3">
    <location>
        <begin position="423"/>
        <end position="431"/>
    </location>
</feature>
<feature type="helix" evidence="3">
    <location>
        <begin position="434"/>
        <end position="446"/>
    </location>
</feature>
<feature type="helix" evidence="3">
    <location>
        <begin position="451"/>
        <end position="455"/>
    </location>
</feature>
<feature type="helix" evidence="3">
    <location>
        <begin position="465"/>
        <end position="469"/>
    </location>
</feature>
<feature type="strand" evidence="3">
    <location>
        <begin position="475"/>
        <end position="479"/>
    </location>
</feature>
<feature type="strand" evidence="3">
    <location>
        <begin position="482"/>
        <end position="486"/>
    </location>
</feature>
<dbReference type="EC" id="1.8.1.12"/>
<dbReference type="EMBL" id="X63188">
    <property type="protein sequence ID" value="CAA44870.1"/>
    <property type="molecule type" value="Genomic_DNA"/>
</dbReference>
<dbReference type="PIR" id="S28003">
    <property type="entry name" value="S28003"/>
</dbReference>
<dbReference type="PDB" id="2WBA">
    <property type="method" value="X-ray"/>
    <property type="resolution" value="2.30 A"/>
    <property type="chains" value="A/B=1-492"/>
</dbReference>
<dbReference type="PDBsum" id="2WBA"/>
<dbReference type="SMR" id="P39051"/>
<dbReference type="BindingDB" id="P39051"/>
<dbReference type="ChEMBL" id="CHEMBL1837"/>
<dbReference type="DrugCentral" id="P39051"/>
<dbReference type="BRENDA" id="1.8.1.12">
    <property type="organism ID" value="6519"/>
</dbReference>
<dbReference type="EvolutionaryTrace" id="P39051"/>
<dbReference type="GO" id="GO:0005829">
    <property type="term" value="C:cytosol"/>
    <property type="evidence" value="ECO:0007669"/>
    <property type="project" value="TreeGrafter"/>
</dbReference>
<dbReference type="GO" id="GO:0005739">
    <property type="term" value="C:mitochondrion"/>
    <property type="evidence" value="ECO:0007669"/>
    <property type="project" value="TreeGrafter"/>
</dbReference>
<dbReference type="GO" id="GO:0050660">
    <property type="term" value="F:flavin adenine dinucleotide binding"/>
    <property type="evidence" value="ECO:0007669"/>
    <property type="project" value="InterPro"/>
</dbReference>
<dbReference type="GO" id="GO:0004362">
    <property type="term" value="F:glutathione-disulfide reductase (NADPH) activity"/>
    <property type="evidence" value="ECO:0007669"/>
    <property type="project" value="TreeGrafter"/>
</dbReference>
<dbReference type="GO" id="GO:0015042">
    <property type="term" value="F:trypanothione-disulfide reductase (NADPH) activity"/>
    <property type="evidence" value="ECO:0007669"/>
    <property type="project" value="UniProtKB-EC"/>
</dbReference>
<dbReference type="GO" id="GO:0045454">
    <property type="term" value="P:cell redox homeostasis"/>
    <property type="evidence" value="ECO:0007669"/>
    <property type="project" value="InterPro"/>
</dbReference>
<dbReference type="GO" id="GO:0034599">
    <property type="term" value="P:cellular response to oxidative stress"/>
    <property type="evidence" value="ECO:0007669"/>
    <property type="project" value="TreeGrafter"/>
</dbReference>
<dbReference type="GO" id="GO:0006749">
    <property type="term" value="P:glutathione metabolic process"/>
    <property type="evidence" value="ECO:0007669"/>
    <property type="project" value="TreeGrafter"/>
</dbReference>
<dbReference type="FunFam" id="3.50.50.60:FF:000051">
    <property type="entry name" value="Glutathione reductase"/>
    <property type="match status" value="1"/>
</dbReference>
<dbReference type="FunFam" id="3.50.50.60:FF:000233">
    <property type="entry name" value="Trypanothione reductase"/>
    <property type="match status" value="1"/>
</dbReference>
<dbReference type="Gene3D" id="3.30.390.30">
    <property type="match status" value="1"/>
</dbReference>
<dbReference type="Gene3D" id="3.50.50.60">
    <property type="entry name" value="FAD/NAD(P)-binding domain"/>
    <property type="match status" value="2"/>
</dbReference>
<dbReference type="InterPro" id="IPR036188">
    <property type="entry name" value="FAD/NAD-bd_sf"/>
</dbReference>
<dbReference type="InterPro" id="IPR023753">
    <property type="entry name" value="FAD/NAD-binding_dom"/>
</dbReference>
<dbReference type="InterPro" id="IPR016156">
    <property type="entry name" value="FAD/NAD-linked_Rdtase_dimer_sf"/>
</dbReference>
<dbReference type="InterPro" id="IPR046952">
    <property type="entry name" value="GSHR/TRXR-like"/>
</dbReference>
<dbReference type="InterPro" id="IPR001100">
    <property type="entry name" value="Pyr_nuc-diS_OxRdtase"/>
</dbReference>
<dbReference type="InterPro" id="IPR004099">
    <property type="entry name" value="Pyr_nucl-diS_OxRdtase_dimer"/>
</dbReference>
<dbReference type="InterPro" id="IPR012999">
    <property type="entry name" value="Pyr_OxRdtase_I_AS"/>
</dbReference>
<dbReference type="InterPro" id="IPR001864">
    <property type="entry name" value="Trypnth_redctse"/>
</dbReference>
<dbReference type="NCBIfam" id="TIGR01423">
    <property type="entry name" value="trypano_reduc"/>
    <property type="match status" value="1"/>
</dbReference>
<dbReference type="PANTHER" id="PTHR42737">
    <property type="entry name" value="GLUTATHIONE REDUCTASE"/>
    <property type="match status" value="1"/>
</dbReference>
<dbReference type="PANTHER" id="PTHR42737:SF2">
    <property type="entry name" value="GLUTATHIONE REDUCTASE"/>
    <property type="match status" value="1"/>
</dbReference>
<dbReference type="Pfam" id="PF07992">
    <property type="entry name" value="Pyr_redox_2"/>
    <property type="match status" value="1"/>
</dbReference>
<dbReference type="Pfam" id="PF02852">
    <property type="entry name" value="Pyr_redox_dim"/>
    <property type="match status" value="1"/>
</dbReference>
<dbReference type="PIRSF" id="PIRSF000350">
    <property type="entry name" value="Mercury_reductase_MerA"/>
    <property type="match status" value="1"/>
</dbReference>
<dbReference type="PRINTS" id="PR00368">
    <property type="entry name" value="FADPNR"/>
</dbReference>
<dbReference type="PRINTS" id="PR00411">
    <property type="entry name" value="PNDRDTASEI"/>
</dbReference>
<dbReference type="PRINTS" id="PR00470">
    <property type="entry name" value="TRYPANRDTASE"/>
</dbReference>
<dbReference type="SUPFAM" id="SSF51905">
    <property type="entry name" value="FAD/NAD(P)-binding domain"/>
    <property type="match status" value="1"/>
</dbReference>
<dbReference type="SUPFAM" id="SSF55424">
    <property type="entry name" value="FAD/NAD-linked reductases, dimerisation (C-terminal) domain"/>
    <property type="match status" value="1"/>
</dbReference>
<dbReference type="SUPFAM" id="SSF51971">
    <property type="entry name" value="Nucleotide-binding domain"/>
    <property type="match status" value="1"/>
</dbReference>
<dbReference type="PROSITE" id="PS00076">
    <property type="entry name" value="PYRIDINE_REDOX_1"/>
    <property type="match status" value="1"/>
</dbReference>
<name>TYTR_TRYBB</name>
<organism>
    <name type="scientific">Trypanosoma brucei brucei</name>
    <dbReference type="NCBI Taxonomy" id="5702"/>
    <lineage>
        <taxon>Eukaryota</taxon>
        <taxon>Discoba</taxon>
        <taxon>Euglenozoa</taxon>
        <taxon>Kinetoplastea</taxon>
        <taxon>Metakinetoplastina</taxon>
        <taxon>Trypanosomatida</taxon>
        <taxon>Trypanosomatidae</taxon>
        <taxon>Trypanosoma</taxon>
    </lineage>
</organism>
<protein>
    <recommendedName>
        <fullName>Trypanothione reductase</fullName>
        <shortName>TR</shortName>
        <ecNumber>1.8.1.12</ecNumber>
    </recommendedName>
    <alternativeName>
        <fullName>N(1),N(8)-bis(glutathionyl)spermidine reductase</fullName>
    </alternativeName>
</protein>